<name>RL39_METTH</name>
<sequence>MSRNKHVARKLRMAKANRQNRRVPAWVMVKTNYRVRSHPKMRHWRRTKLKV</sequence>
<dbReference type="EMBL" id="AE000666">
    <property type="protein sequence ID" value="AAB86086.1"/>
    <property type="molecule type" value="Genomic_DNA"/>
</dbReference>
<dbReference type="PIR" id="E69082">
    <property type="entry name" value="E69082"/>
</dbReference>
<dbReference type="RefSeq" id="WP_010877221.1">
    <property type="nucleotide sequence ID" value="NC_000916.1"/>
</dbReference>
<dbReference type="SMR" id="O27650"/>
<dbReference type="FunCoup" id="O27650">
    <property type="interactions" value="87"/>
</dbReference>
<dbReference type="STRING" id="187420.MTH_1613"/>
<dbReference type="PaxDb" id="187420-MTH_1613"/>
<dbReference type="EnsemblBacteria" id="AAB86086">
    <property type="protein sequence ID" value="AAB86086"/>
    <property type="gene ID" value="MTH_1613"/>
</dbReference>
<dbReference type="KEGG" id="mth:MTH_1613"/>
<dbReference type="HOGENOM" id="CLU_181948_4_0_2"/>
<dbReference type="InParanoid" id="O27650"/>
<dbReference type="Proteomes" id="UP000005223">
    <property type="component" value="Chromosome"/>
</dbReference>
<dbReference type="GO" id="GO:1990904">
    <property type="term" value="C:ribonucleoprotein complex"/>
    <property type="evidence" value="ECO:0007669"/>
    <property type="project" value="UniProtKB-KW"/>
</dbReference>
<dbReference type="GO" id="GO:0005840">
    <property type="term" value="C:ribosome"/>
    <property type="evidence" value="ECO:0007669"/>
    <property type="project" value="UniProtKB-KW"/>
</dbReference>
<dbReference type="GO" id="GO:0003735">
    <property type="term" value="F:structural constituent of ribosome"/>
    <property type="evidence" value="ECO:0007669"/>
    <property type="project" value="InterPro"/>
</dbReference>
<dbReference type="GO" id="GO:0006412">
    <property type="term" value="P:translation"/>
    <property type="evidence" value="ECO:0007669"/>
    <property type="project" value="UniProtKB-UniRule"/>
</dbReference>
<dbReference type="FunFam" id="1.10.1620.10:FF:000001">
    <property type="entry name" value="60S ribosomal protein-like L39"/>
    <property type="match status" value="1"/>
</dbReference>
<dbReference type="Gene3D" id="1.10.1620.10">
    <property type="entry name" value="Ribosomal protein L39e"/>
    <property type="match status" value="1"/>
</dbReference>
<dbReference type="HAMAP" id="MF_00629">
    <property type="entry name" value="Ribosomal_eL39"/>
    <property type="match status" value="1"/>
</dbReference>
<dbReference type="InterPro" id="IPR000077">
    <property type="entry name" value="Ribosomal_eL39"/>
</dbReference>
<dbReference type="InterPro" id="IPR020083">
    <property type="entry name" value="Ribosomal_eL39_CS"/>
</dbReference>
<dbReference type="InterPro" id="IPR023626">
    <property type="entry name" value="Ribosomal_eL39_dom_sf"/>
</dbReference>
<dbReference type="NCBIfam" id="NF002316">
    <property type="entry name" value="PRK01242.1"/>
    <property type="match status" value="1"/>
</dbReference>
<dbReference type="Pfam" id="PF00832">
    <property type="entry name" value="Ribosomal_L39"/>
    <property type="match status" value="1"/>
</dbReference>
<dbReference type="SUPFAM" id="SSF48662">
    <property type="entry name" value="Ribosomal protein L39e"/>
    <property type="match status" value="1"/>
</dbReference>
<dbReference type="PROSITE" id="PS00051">
    <property type="entry name" value="RIBOSOMAL_L39E"/>
    <property type="match status" value="1"/>
</dbReference>
<reference key="1">
    <citation type="journal article" date="1997" name="J. Bacteriol.">
        <title>Complete genome sequence of Methanobacterium thermoautotrophicum deltaH: functional analysis and comparative genomics.</title>
        <authorList>
            <person name="Smith D.R."/>
            <person name="Doucette-Stamm L.A."/>
            <person name="Deloughery C."/>
            <person name="Lee H.-M."/>
            <person name="Dubois J."/>
            <person name="Aldredge T."/>
            <person name="Bashirzadeh R."/>
            <person name="Blakely D."/>
            <person name="Cook R."/>
            <person name="Gilbert K."/>
            <person name="Harrison D."/>
            <person name="Hoang L."/>
            <person name="Keagle P."/>
            <person name="Lumm W."/>
            <person name="Pothier B."/>
            <person name="Qiu D."/>
            <person name="Spadafora R."/>
            <person name="Vicare R."/>
            <person name="Wang Y."/>
            <person name="Wierzbowski J."/>
            <person name="Gibson R."/>
            <person name="Jiwani N."/>
            <person name="Caruso A."/>
            <person name="Bush D."/>
            <person name="Safer H."/>
            <person name="Patwell D."/>
            <person name="Prabhakar S."/>
            <person name="McDougall S."/>
            <person name="Shimer G."/>
            <person name="Goyal A."/>
            <person name="Pietrovski S."/>
            <person name="Church G.M."/>
            <person name="Daniels C.J."/>
            <person name="Mao J.-I."/>
            <person name="Rice P."/>
            <person name="Noelling J."/>
            <person name="Reeve J.N."/>
        </authorList>
    </citation>
    <scope>NUCLEOTIDE SEQUENCE [LARGE SCALE GENOMIC DNA]</scope>
    <source>
        <strain>ATCC 29096 / DSM 1053 / JCM 10044 / NBRC 100330 / Delta H</strain>
    </source>
</reference>
<feature type="chain" id="PRO_0000127053" description="Large ribosomal subunit protein eL39">
    <location>
        <begin position="1"/>
        <end position="51"/>
    </location>
</feature>
<accession>O27650</accession>
<proteinExistence type="inferred from homology"/>
<evidence type="ECO:0000305" key="1"/>
<gene>
    <name type="primary">rpl39e</name>
    <name type="ordered locus">MTH_1613</name>
</gene>
<comment type="similarity">
    <text evidence="1">Belongs to the eukaryotic ribosomal protein eL39 family.</text>
</comment>
<keyword id="KW-1185">Reference proteome</keyword>
<keyword id="KW-0687">Ribonucleoprotein</keyword>
<keyword id="KW-0689">Ribosomal protein</keyword>
<organism>
    <name type="scientific">Methanothermobacter thermautotrophicus (strain ATCC 29096 / DSM 1053 / JCM 10044 / NBRC 100330 / Delta H)</name>
    <name type="common">Methanobacterium thermoautotrophicum</name>
    <dbReference type="NCBI Taxonomy" id="187420"/>
    <lineage>
        <taxon>Archaea</taxon>
        <taxon>Methanobacteriati</taxon>
        <taxon>Methanobacteriota</taxon>
        <taxon>Methanomada group</taxon>
        <taxon>Methanobacteria</taxon>
        <taxon>Methanobacteriales</taxon>
        <taxon>Methanobacteriaceae</taxon>
        <taxon>Methanothermobacter</taxon>
    </lineage>
</organism>
<protein>
    <recommendedName>
        <fullName evidence="1">Large ribosomal subunit protein eL39</fullName>
    </recommendedName>
    <alternativeName>
        <fullName>50S ribosomal protein L39e</fullName>
    </alternativeName>
</protein>